<gene>
    <name evidence="1" type="primary">azoR</name>
    <name type="ordered locus">Lcho_0306</name>
</gene>
<feature type="chain" id="PRO_1000138979" description="FMN-dependent NADH:quinone oxidoreductase">
    <location>
        <begin position="1"/>
        <end position="209"/>
    </location>
</feature>
<feature type="binding site" evidence="1">
    <location>
        <position position="9"/>
    </location>
    <ligand>
        <name>FMN</name>
        <dbReference type="ChEBI" id="CHEBI:58210"/>
    </ligand>
</feature>
<feature type="binding site" evidence="1">
    <location>
        <begin position="19"/>
        <end position="21"/>
    </location>
    <ligand>
        <name>FMN</name>
        <dbReference type="ChEBI" id="CHEBI:58210"/>
    </ligand>
</feature>
<feature type="binding site" evidence="1">
    <location>
        <begin position="143"/>
        <end position="146"/>
    </location>
    <ligand>
        <name>FMN</name>
        <dbReference type="ChEBI" id="CHEBI:58210"/>
    </ligand>
</feature>
<proteinExistence type="inferred from homology"/>
<accession>B1XW54</accession>
<protein>
    <recommendedName>
        <fullName evidence="1">FMN-dependent NADH:quinone oxidoreductase</fullName>
        <ecNumber evidence="1">1.6.5.-</ecNumber>
    </recommendedName>
    <alternativeName>
        <fullName evidence="1">Azo-dye reductase</fullName>
    </alternativeName>
    <alternativeName>
        <fullName evidence="1">FMN-dependent NADH-azo compound oxidoreductase</fullName>
    </alternativeName>
    <alternativeName>
        <fullName evidence="1">FMN-dependent NADH-azoreductase</fullName>
        <ecNumber evidence="1">1.7.1.17</ecNumber>
    </alternativeName>
</protein>
<evidence type="ECO:0000255" key="1">
    <source>
        <dbReference type="HAMAP-Rule" id="MF_01216"/>
    </source>
</evidence>
<sequence>MKILQVNSSARNFANGVGSVSSQLAGELVARLRDGEPTASVVVRDLARTPHPVLDEAALQALFTPADQRTPAQAERVALDDALIAEIQAADVVVIAAPMFNFGITAQLKNWIDAIARAKVTFQYTANGPEGLLKGKRVHVVLTRGGVYRDQASDNQVPYLRQVLGFLGMTDVEFIYAERQGMGPEASAQGVAEAREQIAALLQLGTATA</sequence>
<organism>
    <name type="scientific">Leptothrix cholodnii (strain ATCC 51168 / LMG 8142 / SP-6)</name>
    <name type="common">Leptothrix discophora (strain SP-6)</name>
    <dbReference type="NCBI Taxonomy" id="395495"/>
    <lineage>
        <taxon>Bacteria</taxon>
        <taxon>Pseudomonadati</taxon>
        <taxon>Pseudomonadota</taxon>
        <taxon>Betaproteobacteria</taxon>
        <taxon>Burkholderiales</taxon>
        <taxon>Sphaerotilaceae</taxon>
        <taxon>Leptothrix</taxon>
    </lineage>
</organism>
<dbReference type="EC" id="1.6.5.-" evidence="1"/>
<dbReference type="EC" id="1.7.1.17" evidence="1"/>
<dbReference type="EMBL" id="CP001013">
    <property type="protein sequence ID" value="ACB32581.1"/>
    <property type="molecule type" value="Genomic_DNA"/>
</dbReference>
<dbReference type="RefSeq" id="WP_012345343.1">
    <property type="nucleotide sequence ID" value="NC_010524.1"/>
</dbReference>
<dbReference type="SMR" id="B1XW54"/>
<dbReference type="STRING" id="395495.Lcho_0306"/>
<dbReference type="KEGG" id="lch:Lcho_0306"/>
<dbReference type="eggNOG" id="COG1182">
    <property type="taxonomic scope" value="Bacteria"/>
</dbReference>
<dbReference type="HOGENOM" id="CLU_088964_0_0_4"/>
<dbReference type="OrthoDB" id="9787136at2"/>
<dbReference type="Proteomes" id="UP000001693">
    <property type="component" value="Chromosome"/>
</dbReference>
<dbReference type="GO" id="GO:0009055">
    <property type="term" value="F:electron transfer activity"/>
    <property type="evidence" value="ECO:0007669"/>
    <property type="project" value="UniProtKB-UniRule"/>
</dbReference>
<dbReference type="GO" id="GO:0010181">
    <property type="term" value="F:FMN binding"/>
    <property type="evidence" value="ECO:0007669"/>
    <property type="project" value="UniProtKB-UniRule"/>
</dbReference>
<dbReference type="GO" id="GO:0016652">
    <property type="term" value="F:oxidoreductase activity, acting on NAD(P)H as acceptor"/>
    <property type="evidence" value="ECO:0007669"/>
    <property type="project" value="UniProtKB-UniRule"/>
</dbReference>
<dbReference type="GO" id="GO:0016655">
    <property type="term" value="F:oxidoreductase activity, acting on NAD(P)H, quinone or similar compound as acceptor"/>
    <property type="evidence" value="ECO:0007669"/>
    <property type="project" value="InterPro"/>
</dbReference>
<dbReference type="Gene3D" id="3.40.50.360">
    <property type="match status" value="1"/>
</dbReference>
<dbReference type="HAMAP" id="MF_01216">
    <property type="entry name" value="Azoreductase_type1"/>
    <property type="match status" value="1"/>
</dbReference>
<dbReference type="InterPro" id="IPR003680">
    <property type="entry name" value="Flavodoxin_fold"/>
</dbReference>
<dbReference type="InterPro" id="IPR029039">
    <property type="entry name" value="Flavoprotein-like_sf"/>
</dbReference>
<dbReference type="InterPro" id="IPR050104">
    <property type="entry name" value="FMN-dep_NADH:Q_OxRdtase_AzoR1"/>
</dbReference>
<dbReference type="InterPro" id="IPR023048">
    <property type="entry name" value="NADH:quinone_OxRdtase_FMN_depd"/>
</dbReference>
<dbReference type="PANTHER" id="PTHR43741">
    <property type="entry name" value="FMN-DEPENDENT NADH-AZOREDUCTASE 1"/>
    <property type="match status" value="1"/>
</dbReference>
<dbReference type="PANTHER" id="PTHR43741:SF2">
    <property type="entry name" value="FMN-DEPENDENT NADH:QUINONE OXIDOREDUCTASE"/>
    <property type="match status" value="1"/>
</dbReference>
<dbReference type="Pfam" id="PF02525">
    <property type="entry name" value="Flavodoxin_2"/>
    <property type="match status" value="1"/>
</dbReference>
<dbReference type="SUPFAM" id="SSF52218">
    <property type="entry name" value="Flavoproteins"/>
    <property type="match status" value="1"/>
</dbReference>
<comment type="function">
    <text evidence="1">Quinone reductase that provides resistance to thiol-specific stress caused by electrophilic quinones.</text>
</comment>
<comment type="function">
    <text evidence="1">Also exhibits azoreductase activity. Catalyzes the reductive cleavage of the azo bond in aromatic azo compounds to the corresponding amines.</text>
</comment>
<comment type="catalytic activity">
    <reaction evidence="1">
        <text>2 a quinone + NADH + H(+) = 2 a 1,4-benzosemiquinone + NAD(+)</text>
        <dbReference type="Rhea" id="RHEA:65952"/>
        <dbReference type="ChEBI" id="CHEBI:15378"/>
        <dbReference type="ChEBI" id="CHEBI:57540"/>
        <dbReference type="ChEBI" id="CHEBI:57945"/>
        <dbReference type="ChEBI" id="CHEBI:132124"/>
        <dbReference type="ChEBI" id="CHEBI:134225"/>
    </reaction>
</comment>
<comment type="catalytic activity">
    <reaction evidence="1">
        <text>N,N-dimethyl-1,4-phenylenediamine + anthranilate + 2 NAD(+) = 2-(4-dimethylaminophenyl)diazenylbenzoate + 2 NADH + 2 H(+)</text>
        <dbReference type="Rhea" id="RHEA:55872"/>
        <dbReference type="ChEBI" id="CHEBI:15378"/>
        <dbReference type="ChEBI" id="CHEBI:15783"/>
        <dbReference type="ChEBI" id="CHEBI:16567"/>
        <dbReference type="ChEBI" id="CHEBI:57540"/>
        <dbReference type="ChEBI" id="CHEBI:57945"/>
        <dbReference type="ChEBI" id="CHEBI:71579"/>
        <dbReference type="EC" id="1.7.1.17"/>
    </reaction>
</comment>
<comment type="cofactor">
    <cofactor evidence="1">
        <name>FMN</name>
        <dbReference type="ChEBI" id="CHEBI:58210"/>
    </cofactor>
    <text evidence="1">Binds 1 FMN per subunit.</text>
</comment>
<comment type="subunit">
    <text evidence="1">Homodimer.</text>
</comment>
<comment type="similarity">
    <text evidence="1">Belongs to the azoreductase type 1 family.</text>
</comment>
<reference key="1">
    <citation type="submission" date="2008-03" db="EMBL/GenBank/DDBJ databases">
        <title>Complete sequence of Leptothrix cholodnii SP-6.</title>
        <authorList>
            <consortium name="US DOE Joint Genome Institute"/>
            <person name="Copeland A."/>
            <person name="Lucas S."/>
            <person name="Lapidus A."/>
            <person name="Glavina del Rio T."/>
            <person name="Dalin E."/>
            <person name="Tice H."/>
            <person name="Bruce D."/>
            <person name="Goodwin L."/>
            <person name="Pitluck S."/>
            <person name="Chertkov O."/>
            <person name="Brettin T."/>
            <person name="Detter J.C."/>
            <person name="Han C."/>
            <person name="Kuske C.R."/>
            <person name="Schmutz J."/>
            <person name="Larimer F."/>
            <person name="Land M."/>
            <person name="Hauser L."/>
            <person name="Kyrpides N."/>
            <person name="Lykidis A."/>
            <person name="Emerson D."/>
            <person name="Richardson P."/>
        </authorList>
    </citation>
    <scope>NUCLEOTIDE SEQUENCE [LARGE SCALE GENOMIC DNA]</scope>
    <source>
        <strain>ATCC 51168 / LMG 8142 / SP-6</strain>
    </source>
</reference>
<name>AZOR_LEPCP</name>
<keyword id="KW-0285">Flavoprotein</keyword>
<keyword id="KW-0288">FMN</keyword>
<keyword id="KW-0520">NAD</keyword>
<keyword id="KW-0560">Oxidoreductase</keyword>
<keyword id="KW-1185">Reference proteome</keyword>